<dbReference type="EC" id="3.4.21.-" evidence="3 4"/>
<dbReference type="EMBL" id="KC537787">
    <property type="protein sequence ID" value="AGK44857.1"/>
    <property type="molecule type" value="mRNA"/>
</dbReference>
<dbReference type="SMR" id="N0A5N4"/>
<dbReference type="MEROPS" id="S01.331"/>
<dbReference type="GO" id="GO:0005576">
    <property type="term" value="C:extracellular region"/>
    <property type="evidence" value="ECO:0000314"/>
    <property type="project" value="UniProtKB"/>
</dbReference>
<dbReference type="GO" id="GO:0043245">
    <property type="term" value="C:extraorganismal space"/>
    <property type="evidence" value="ECO:0000314"/>
    <property type="project" value="UniProtKB"/>
</dbReference>
<dbReference type="GO" id="GO:0030141">
    <property type="term" value="C:secretory granule"/>
    <property type="evidence" value="ECO:0007669"/>
    <property type="project" value="TreeGrafter"/>
</dbReference>
<dbReference type="GO" id="GO:0004252">
    <property type="term" value="F:serine-type endopeptidase activity"/>
    <property type="evidence" value="ECO:0007669"/>
    <property type="project" value="InterPro"/>
</dbReference>
<dbReference type="GO" id="GO:0008236">
    <property type="term" value="F:serine-type peptidase activity"/>
    <property type="evidence" value="ECO:0000314"/>
    <property type="project" value="UniProtKB"/>
</dbReference>
<dbReference type="GO" id="GO:0090729">
    <property type="term" value="F:toxin activity"/>
    <property type="evidence" value="ECO:0000314"/>
    <property type="project" value="UniProtKB"/>
</dbReference>
<dbReference type="GO" id="GO:0006508">
    <property type="term" value="P:proteolysis"/>
    <property type="evidence" value="ECO:0007669"/>
    <property type="project" value="UniProtKB-KW"/>
</dbReference>
<dbReference type="GO" id="GO:0044478">
    <property type="term" value="P:venom-mediated platelet aggregation"/>
    <property type="evidence" value="ECO:0000314"/>
    <property type="project" value="UniProtKB"/>
</dbReference>
<dbReference type="GO" id="GO:0044470">
    <property type="term" value="P:venom-mediated suppression of blood coagulation"/>
    <property type="evidence" value="ECO:0000314"/>
    <property type="project" value="GO_Central"/>
</dbReference>
<dbReference type="CDD" id="cd00190">
    <property type="entry name" value="Tryp_SPc"/>
    <property type="match status" value="1"/>
</dbReference>
<dbReference type="FunFam" id="2.40.10.10:FF:000158">
    <property type="entry name" value="Thrombin-like enzyme saxthrombin"/>
    <property type="match status" value="1"/>
</dbReference>
<dbReference type="FunFam" id="2.40.10.10:FF:000153">
    <property type="entry name" value="Venom plasminogen activator TSV-PA"/>
    <property type="match status" value="1"/>
</dbReference>
<dbReference type="Gene3D" id="2.40.10.10">
    <property type="entry name" value="Trypsin-like serine proteases"/>
    <property type="match status" value="2"/>
</dbReference>
<dbReference type="InterPro" id="IPR009003">
    <property type="entry name" value="Peptidase_S1_PA"/>
</dbReference>
<dbReference type="InterPro" id="IPR043504">
    <property type="entry name" value="Peptidase_S1_PA_chymotrypsin"/>
</dbReference>
<dbReference type="InterPro" id="IPR001314">
    <property type="entry name" value="Peptidase_S1A"/>
</dbReference>
<dbReference type="InterPro" id="IPR001254">
    <property type="entry name" value="Trypsin_dom"/>
</dbReference>
<dbReference type="InterPro" id="IPR018114">
    <property type="entry name" value="TRYPSIN_HIS"/>
</dbReference>
<dbReference type="InterPro" id="IPR033116">
    <property type="entry name" value="TRYPSIN_SER"/>
</dbReference>
<dbReference type="PANTHER" id="PTHR24271:SF47">
    <property type="entry name" value="KALLIKREIN-1"/>
    <property type="match status" value="1"/>
</dbReference>
<dbReference type="PANTHER" id="PTHR24271">
    <property type="entry name" value="KALLIKREIN-RELATED"/>
    <property type="match status" value="1"/>
</dbReference>
<dbReference type="Pfam" id="PF00089">
    <property type="entry name" value="Trypsin"/>
    <property type="match status" value="1"/>
</dbReference>
<dbReference type="PRINTS" id="PR00722">
    <property type="entry name" value="CHYMOTRYPSIN"/>
</dbReference>
<dbReference type="SMART" id="SM00020">
    <property type="entry name" value="Tryp_SPc"/>
    <property type="match status" value="1"/>
</dbReference>
<dbReference type="SUPFAM" id="SSF50494">
    <property type="entry name" value="Trypsin-like serine proteases"/>
    <property type="match status" value="1"/>
</dbReference>
<dbReference type="PROSITE" id="PS50240">
    <property type="entry name" value="TRYPSIN_DOM"/>
    <property type="match status" value="1"/>
</dbReference>
<dbReference type="PROSITE" id="PS00134">
    <property type="entry name" value="TRYPSIN_HIS"/>
    <property type="match status" value="1"/>
</dbReference>
<dbReference type="PROSITE" id="PS00135">
    <property type="entry name" value="TRYPSIN_SER"/>
    <property type="match status" value="1"/>
</dbReference>
<comment type="function">
    <text evidence="3 4">Thrombin-like enzyme that shows fibrinogenolytic activity against bovine fibrinogen alpha and beta chains, but not gamma chain. Hydrolyzes fibrin. Enhances ADP-induced human platelet aggregation. Has arginine esterase activity for TAMe (tosyl-arginine methyl ester) substrate. Reduces thrombin-induced thrombosis. Does not have hemorrhagic activity (PubMed:27666486, PubMed:28579355). Reduces the motility of human liver cancer HepG2 cells in a wound-healing assay (PubMed:28579355).</text>
</comment>
<comment type="activity regulation">
    <text evidence="3">The hydrolysis of TAMe (tosyl-arginine methyl ester) substrate is activated by Ca(2+), Fe(3+), Mg(2+) and Zn(2+), and inhibited by EDTA, PMSF and DTT.</text>
</comment>
<comment type="biophysicochemical properties">
    <kinetics>
        <Vmax evidence="4">9.1 umol/min/mg enzyme for the hydrolysis of TAMe (tosyl-arginine methyl ester) substrate</Vmax>
    </kinetics>
    <temperatureDependence>
        <text evidence="3">Optimum temperature is 37 degrees Celsius for the hydrolysis of TAMe (tosyl-arginine methyl ester) substrate. Thermolabile. Activity is reduced about 50% after incubation at 50-55 degrees Celsius for 30 min. Loss of activity after incubation at &gt;60 degrees Celsius for 30 min.</text>
    </temperatureDependence>
</comment>
<comment type="subcellular location">
    <subcellularLocation>
        <location evidence="3">Secreted</location>
    </subcellularLocation>
</comment>
<comment type="tissue specificity">
    <text evidence="3">Expressed by the venom gland (at protein level). Expressed by the venom gland.</text>
</comment>
<comment type="biotechnology">
    <text evidence="3 4">Has potential to be used as a thrombolytic drug due to its fibrinolytic, fibrinogenolytic and thrombosis-reducing activities without concomitant hemorrhagic activity.</text>
</comment>
<comment type="similarity">
    <text evidence="7">Belongs to the peptidase S1 family. Snake venom subfamily.</text>
</comment>
<reference evidence="9" key="1">
    <citation type="journal article" date="2016" name="Toxicon">
        <title>Agkihpin, a novel SVTLE from Gloydius halys Pallas, promotes platelet aggregation in vitro and inhibits thrombus formation in vivo in murine models of thrombosis.</title>
        <authorList>
            <person name="Xie H."/>
            <person name="Huang M."/>
            <person name="Hu Q."/>
            <person name="Sun K."/>
            <person name="Wu H."/>
            <person name="Shu W."/>
            <person name="Li X."/>
            <person name="Fang L."/>
        </authorList>
    </citation>
    <scope>NUCLEOTIDE SEQUENCE [MRNA]</scope>
    <scope>PROTEIN SEQUENCE OF 2-12; 2-14; 24-43; 52-57; 59-67; 73-79; 87-92; 121-126; 153-165 AND 153-176</scope>
    <scope>FUNCTION</scope>
    <scope>CATALYTIC ACTIVITY</scope>
    <scope>ACTIVITY REGULATION</scope>
    <scope>BIOPHYSICOCHEMICAL PROPERTIES</scope>
    <scope>SUBCELLULAR LOCATION</scope>
    <scope>TISSUE SPECIFICITY</scope>
    <scope>IDENTIFICATION BY MASS SPECTROMETRY</scope>
    <scope>BIOTECHNOLOGY</scope>
    <source>
        <tissue evidence="5">Venom</tissue>
        <tissue evidence="5">Venom gland</tissue>
    </source>
</reference>
<reference key="2">
    <citation type="journal article" date="2017" name="Protein Expr. Purif.">
        <title>Expression, purification and characterization of a novel recombinant SVTLE, r-agkihpin-2, from Gloydius halys Pallas venom gland in Escherichia coli.</title>
        <authorList>
            <person name="Sun K."/>
            <person name="Huang C."/>
            <person name="Yu F."/>
            <person name="Zhu S."/>
            <person name="Xu S."/>
            <person name="He Y."/>
            <person name="Xu W."/>
            <person name="Xu L."/>
            <person name="Feng Y."/>
            <person name="Wu H."/>
            <person name="Li X."/>
            <person name="Fang L."/>
            <person name="Hu Q."/>
        </authorList>
    </citation>
    <scope>PROTEIN SEQUENCE OF 6-14; 24-46; 52-57; 59-67; 73-79; 87-92; 121-126 AND 153-176</scope>
    <scope>FUNCTION</scope>
    <scope>CATALYTIC ACTIVITY</scope>
    <scope>BIOPHYSICOCHEMICAL PROPERTIES</scope>
    <scope>IDENTIFICATION BY MASS SPECTROMETRY</scope>
    <scope>BIOTECHNOLOGY</scope>
</reference>
<accession>N0A5N4</accession>
<protein>
    <recommendedName>
        <fullName evidence="5 6">Thrombin-like enzyme agkihpin-2</fullName>
        <shortName evidence="6">TLE agkihpin-2</shortName>
        <ecNumber evidence="3 4">3.4.21.-</ecNumber>
    </recommendedName>
    <alternativeName>
        <fullName evidence="9">Agkihpin</fullName>
    </alternativeName>
    <alternativeName>
        <fullName evidence="5">Snake venom arginine esterase</fullName>
        <shortName evidence="5">SVAE</shortName>
    </alternativeName>
    <alternativeName>
        <fullName evidence="5 6">Snake venom thrombin-like enzyme</fullName>
        <shortName evidence="5 6">SVTLE</shortName>
    </alternativeName>
</protein>
<keyword id="KW-0903">Direct protein sequencing</keyword>
<keyword id="KW-1015">Disulfide bond</keyword>
<keyword id="KW-1206">Fibrinogenolytic toxin</keyword>
<keyword id="KW-1205">Fibrinolytic toxin</keyword>
<keyword id="KW-0325">Glycoprotein</keyword>
<keyword id="KW-1199">Hemostasis impairing toxin</keyword>
<keyword id="KW-0378">Hydrolase</keyword>
<keyword id="KW-1202">Platelet aggregation activating toxin</keyword>
<keyword id="KW-0645">Protease</keyword>
<keyword id="KW-0964">Secreted</keyword>
<keyword id="KW-0720">Serine protease</keyword>
<keyword id="KW-0800">Toxin</keyword>
<proteinExistence type="evidence at protein level"/>
<feature type="propeptide" id="PRO_0000457559" evidence="7">
    <location>
        <begin position="1" status="less than"/>
        <end position="1"/>
    </location>
</feature>
<feature type="chain" id="PRO_0000457560" description="Thrombin-like enzyme agkihpin-2" evidence="8">
    <location>
        <begin position="2"/>
        <end position="237"/>
    </location>
</feature>
<feature type="domain" description="Peptidase S1" evidence="1">
    <location>
        <begin position="2"/>
        <end position="228"/>
    </location>
</feature>
<feature type="active site" description="Charge relay system" evidence="1">
    <location>
        <position position="42"/>
    </location>
</feature>
<feature type="active site" description="Charge relay system" evidence="1">
    <location>
        <position position="87"/>
    </location>
</feature>
<feature type="active site" description="Charge relay system" evidence="1">
    <location>
        <position position="183"/>
    </location>
</feature>
<feature type="glycosylation site" description="N-linked (GlcNAc...) asparagine" evidence="2">
    <location>
        <position position="80"/>
    </location>
</feature>
<feature type="disulfide bond" evidence="1">
    <location>
        <begin position="27"/>
        <end position="43"/>
    </location>
</feature>
<feature type="disulfide bond" evidence="1">
    <location>
        <begin position="119"/>
        <end position="189"/>
    </location>
</feature>
<feature type="disulfide bond" evidence="1">
    <location>
        <begin position="151"/>
        <end position="168"/>
    </location>
</feature>
<feature type="disulfide bond" evidence="1">
    <location>
        <begin position="179"/>
        <end position="204"/>
    </location>
</feature>
<feature type="sequence conflict" description="In Ref. 2; AA sequence." evidence="7" ref="2">
    <original>NME</original>
    <variation>DRK</variation>
    <location>
        <begin position="44"/>
        <end position="46"/>
    </location>
</feature>
<feature type="sequence conflict" description="In Ref. 1; AA sequence and 2; AA sequence." evidence="7" ref="1 2">
    <original>E</original>
    <variation>K</variation>
    <location>
        <position position="62"/>
    </location>
</feature>
<feature type="sequence conflict" description="In Ref. 2; AA sequence." evidence="7" ref="2">
    <original>K</original>
    <variation>T</variation>
    <location>
        <position position="66"/>
    </location>
</feature>
<feature type="sequence conflict" description="In Ref. 1; AA sequence and 2; AA sequence." evidence="7" ref="1 2">
    <original>T</original>
    <variation>I</variation>
    <location>
        <position position="121"/>
    </location>
</feature>
<feature type="non-terminal residue" evidence="7">
    <location>
        <position position="1"/>
    </location>
</feature>
<name>VAE2_GLOHA</name>
<sequence>MILGDDECNINEHRFLVALYTSRTLFCGGTLINQEWVLTAAHCNMEDIQIKLGMHSKKVPNEDEQKRVPKEKFFCLSSKNYTLWDKDIMLIRLDSPVKNSAHIAPLSLPSSPPSVGSVCRTMGWGRISSTKETYPDVPHCVNINLLEYEMCRAPYPEFELPATSRTLCAGILEGGKDTCVGDSGGPLICNGQFQGIASWGDDPCAQPHKPAAYTKVFDHLDWIENIIAGNTDASCPP</sequence>
<evidence type="ECO:0000255" key="1">
    <source>
        <dbReference type="PROSITE-ProRule" id="PRU00274"/>
    </source>
</evidence>
<evidence type="ECO:0000255" key="2">
    <source>
        <dbReference type="PROSITE-ProRule" id="PRU00498"/>
    </source>
</evidence>
<evidence type="ECO:0000269" key="3">
    <source>
    </source>
</evidence>
<evidence type="ECO:0000269" key="4">
    <source>
    </source>
</evidence>
<evidence type="ECO:0000303" key="5">
    <source>
    </source>
</evidence>
<evidence type="ECO:0000303" key="6">
    <source>
    </source>
</evidence>
<evidence type="ECO:0000305" key="7"/>
<evidence type="ECO:0000305" key="8">
    <source>
    </source>
</evidence>
<evidence type="ECO:0000312" key="9">
    <source>
        <dbReference type="EMBL" id="AGK44857.1"/>
    </source>
</evidence>
<organism evidence="9">
    <name type="scientific">Gloydius halys</name>
    <name type="common">Chinese water mocassin</name>
    <name type="synonym">Agkistrodon halys</name>
    <dbReference type="NCBI Taxonomy" id="8714"/>
    <lineage>
        <taxon>Eukaryota</taxon>
        <taxon>Metazoa</taxon>
        <taxon>Chordata</taxon>
        <taxon>Craniata</taxon>
        <taxon>Vertebrata</taxon>
        <taxon>Euteleostomi</taxon>
        <taxon>Lepidosauria</taxon>
        <taxon>Squamata</taxon>
        <taxon>Bifurcata</taxon>
        <taxon>Unidentata</taxon>
        <taxon>Episquamata</taxon>
        <taxon>Toxicofera</taxon>
        <taxon>Serpentes</taxon>
        <taxon>Colubroidea</taxon>
        <taxon>Viperidae</taxon>
        <taxon>Crotalinae</taxon>
        <taxon>Gloydius</taxon>
    </lineage>
</organism>